<evidence type="ECO:0000255" key="1">
    <source>
        <dbReference type="HAMAP-Rule" id="MF_01651"/>
    </source>
</evidence>
<comment type="function">
    <text evidence="1">Part of the multicomponent 3-phenylpropionate dioxygenase, that converts 3-phenylpropionic acid (PP) and cinnamic acid (CI) into 3-phenylpropionate-dihydrodiol (PP-dihydrodiol) and cinnamic acid-dihydrodiol (CI-dihydrodiol), respectively.</text>
</comment>
<comment type="catalytic activity">
    <reaction evidence="1">
        <text>2 reduced [2Fe-2S]-[ferredoxin] + NAD(+) + H(+) = 2 oxidized [2Fe-2S]-[ferredoxin] + NADH</text>
        <dbReference type="Rhea" id="RHEA:16521"/>
        <dbReference type="Rhea" id="RHEA-COMP:10000"/>
        <dbReference type="Rhea" id="RHEA-COMP:10001"/>
        <dbReference type="ChEBI" id="CHEBI:15378"/>
        <dbReference type="ChEBI" id="CHEBI:33737"/>
        <dbReference type="ChEBI" id="CHEBI:33738"/>
        <dbReference type="ChEBI" id="CHEBI:57540"/>
        <dbReference type="ChEBI" id="CHEBI:57945"/>
        <dbReference type="EC" id="1.18.1.3"/>
    </reaction>
</comment>
<comment type="cofactor">
    <cofactor evidence="1">
        <name>FAD</name>
        <dbReference type="ChEBI" id="CHEBI:57692"/>
    </cofactor>
</comment>
<comment type="pathway">
    <text evidence="1">Aromatic compound metabolism; 3-phenylpropanoate degradation.</text>
</comment>
<comment type="subunit">
    <text evidence="1">This dioxygenase system consists of four proteins: the two subunits of the hydroxylase component (HcaE and HcaF), a ferredoxin (HcaC) and a ferredoxin reductase (HcaD).</text>
</comment>
<comment type="similarity">
    <text evidence="1">Belongs to the bacterial ring-hydroxylating dioxygenase ferredoxin reductase family.</text>
</comment>
<accession>Q3YZ11</accession>
<organism>
    <name type="scientific">Shigella sonnei (strain Ss046)</name>
    <dbReference type="NCBI Taxonomy" id="300269"/>
    <lineage>
        <taxon>Bacteria</taxon>
        <taxon>Pseudomonadati</taxon>
        <taxon>Pseudomonadota</taxon>
        <taxon>Gammaproteobacteria</taxon>
        <taxon>Enterobacterales</taxon>
        <taxon>Enterobacteriaceae</taxon>
        <taxon>Shigella</taxon>
    </lineage>
</organism>
<feature type="chain" id="PRO_0000333729" description="3-phenylpropionate/cinnamic acid dioxygenase ferredoxin--NAD(+) reductase component">
    <location>
        <begin position="1"/>
        <end position="400"/>
    </location>
</feature>
<feature type="binding site" evidence="1">
    <location>
        <begin position="5"/>
        <end position="36"/>
    </location>
    <ligand>
        <name>FAD</name>
        <dbReference type="ChEBI" id="CHEBI:57692"/>
    </ligand>
</feature>
<feature type="binding site" evidence="1">
    <location>
        <begin position="146"/>
        <end position="174"/>
    </location>
    <ligand>
        <name>NAD(+)</name>
        <dbReference type="ChEBI" id="CHEBI:57540"/>
    </ligand>
</feature>
<proteinExistence type="inferred from homology"/>
<sequence length="400" mass="43976">MKEKTIIIVGGGQAAAMAAASLRQQGFTGELHLFSDERHLPYERPPLSKSMLLEDSPQLQQVLPANWWQENNVHLHSGVTIKTLGRDTRELVLTNGESWHWDQLFIAIGAAARPLPLLDALGERCFTLRHAGDAARLREVLQPERSVVIVGAGTIGLELAASATQRRCKVTVIELAATVMGRNAPPPVQRYLLQRHQQAGVRILLNNAIEHVVDGEKVELTLQSGETLQADVVIYGIGISANEQLAREANLDTANGIVIDEACRTCDPAIFAGGDVAITRLDNGALHRCESWENANNQAQIAAAAMLGLPLPLLPPPWFWSDQYSDNLQFIGDMRGDDWLCRGNPETQKAIWFNLQNGVLIGAVTLNQGREIRPIRKWIQSGKTFDAKLLIDENIALKSL</sequence>
<gene>
    <name evidence="1" type="primary">hcaD</name>
    <name type="ordered locus">SSON_2624</name>
</gene>
<keyword id="KW-0058">Aromatic hydrocarbons catabolism</keyword>
<keyword id="KW-0274">FAD</keyword>
<keyword id="KW-0285">Flavoprotein</keyword>
<keyword id="KW-0520">NAD</keyword>
<keyword id="KW-0560">Oxidoreductase</keyword>
<keyword id="KW-1185">Reference proteome</keyword>
<name>HCAD_SHISS</name>
<protein>
    <recommendedName>
        <fullName evidence="1">3-phenylpropionate/cinnamic acid dioxygenase ferredoxin--NAD(+) reductase component</fullName>
        <ecNumber evidence="1">1.18.1.3</ecNumber>
    </recommendedName>
</protein>
<dbReference type="EC" id="1.18.1.3" evidence="1"/>
<dbReference type="EMBL" id="CP000038">
    <property type="protein sequence ID" value="AAZ89251.1"/>
    <property type="molecule type" value="Genomic_DNA"/>
</dbReference>
<dbReference type="RefSeq" id="WP_000660780.1">
    <property type="nucleotide sequence ID" value="NC_007384.1"/>
</dbReference>
<dbReference type="SMR" id="Q3YZ11"/>
<dbReference type="GeneID" id="93774594"/>
<dbReference type="KEGG" id="ssn:SSON_2624"/>
<dbReference type="HOGENOM" id="CLU_003291_4_0_6"/>
<dbReference type="UniPathway" id="UPA00714"/>
<dbReference type="Proteomes" id="UP000002529">
    <property type="component" value="Chromosome"/>
</dbReference>
<dbReference type="GO" id="GO:0005737">
    <property type="term" value="C:cytoplasm"/>
    <property type="evidence" value="ECO:0007669"/>
    <property type="project" value="TreeGrafter"/>
</dbReference>
<dbReference type="GO" id="GO:0008695">
    <property type="term" value="F:3-phenylpropionate dioxygenase activity"/>
    <property type="evidence" value="ECO:0007669"/>
    <property type="project" value="UniProtKB-UniRule"/>
</dbReference>
<dbReference type="GO" id="GO:0008860">
    <property type="term" value="F:ferredoxin-NAD+ reductase activity"/>
    <property type="evidence" value="ECO:0007669"/>
    <property type="project" value="UniProtKB-EC"/>
</dbReference>
<dbReference type="GO" id="GO:0016651">
    <property type="term" value="F:oxidoreductase activity, acting on NAD(P)H"/>
    <property type="evidence" value="ECO:0007669"/>
    <property type="project" value="TreeGrafter"/>
</dbReference>
<dbReference type="GO" id="GO:0019380">
    <property type="term" value="P:3-phenylpropionate catabolic process"/>
    <property type="evidence" value="ECO:0007669"/>
    <property type="project" value="UniProtKB-UniRule"/>
</dbReference>
<dbReference type="FunFam" id="3.30.390.30:FF:000010">
    <property type="entry name" value="3-phenylpropionate/cinnamic acid dioxygenase ferredoxin--NAD(+) reductase component"/>
    <property type="match status" value="1"/>
</dbReference>
<dbReference type="FunFam" id="3.50.50.60:FF:000088">
    <property type="entry name" value="3-phenylpropionate/cinnamic acid dioxygenase ferredoxin--NAD(+) reductase component"/>
    <property type="match status" value="1"/>
</dbReference>
<dbReference type="Gene3D" id="3.30.390.30">
    <property type="match status" value="1"/>
</dbReference>
<dbReference type="Gene3D" id="3.50.50.60">
    <property type="entry name" value="FAD/NAD(P)-binding domain"/>
    <property type="match status" value="2"/>
</dbReference>
<dbReference type="HAMAP" id="MF_01651">
    <property type="entry name" value="HcaD"/>
    <property type="match status" value="1"/>
</dbReference>
<dbReference type="InterPro" id="IPR050446">
    <property type="entry name" value="FAD-oxidoreductase/Apoptosis"/>
</dbReference>
<dbReference type="InterPro" id="IPR036188">
    <property type="entry name" value="FAD/NAD-bd_sf"/>
</dbReference>
<dbReference type="InterPro" id="IPR023753">
    <property type="entry name" value="FAD/NAD-binding_dom"/>
</dbReference>
<dbReference type="InterPro" id="IPR016156">
    <property type="entry name" value="FAD/NAD-linked_Rdtase_dimer_sf"/>
</dbReference>
<dbReference type="InterPro" id="IPR023744">
    <property type="entry name" value="HcaD"/>
</dbReference>
<dbReference type="InterPro" id="IPR028202">
    <property type="entry name" value="Reductase_C"/>
</dbReference>
<dbReference type="InterPro" id="IPR053382">
    <property type="entry name" value="Ring-hydroxylating_dioxygenase"/>
</dbReference>
<dbReference type="NCBIfam" id="NF042949">
    <property type="entry name" value="3PPDioc_HcaD"/>
    <property type="match status" value="1"/>
</dbReference>
<dbReference type="NCBIfam" id="NF007286">
    <property type="entry name" value="PRK09754.1"/>
    <property type="match status" value="1"/>
</dbReference>
<dbReference type="PANTHER" id="PTHR43557">
    <property type="entry name" value="APOPTOSIS-INDUCING FACTOR 1"/>
    <property type="match status" value="1"/>
</dbReference>
<dbReference type="PANTHER" id="PTHR43557:SF2">
    <property type="entry name" value="RIESKE DOMAIN-CONTAINING PROTEIN-RELATED"/>
    <property type="match status" value="1"/>
</dbReference>
<dbReference type="Pfam" id="PF07992">
    <property type="entry name" value="Pyr_redox_2"/>
    <property type="match status" value="1"/>
</dbReference>
<dbReference type="Pfam" id="PF14759">
    <property type="entry name" value="Reductase_C"/>
    <property type="match status" value="1"/>
</dbReference>
<dbReference type="PRINTS" id="PR00368">
    <property type="entry name" value="FADPNR"/>
</dbReference>
<dbReference type="PRINTS" id="PR00411">
    <property type="entry name" value="PNDRDTASEI"/>
</dbReference>
<dbReference type="SUPFAM" id="SSF51905">
    <property type="entry name" value="FAD/NAD(P)-binding domain"/>
    <property type="match status" value="1"/>
</dbReference>
<dbReference type="SUPFAM" id="SSF55424">
    <property type="entry name" value="FAD/NAD-linked reductases, dimerisation (C-terminal) domain"/>
    <property type="match status" value="1"/>
</dbReference>
<reference key="1">
    <citation type="journal article" date="2005" name="Nucleic Acids Res.">
        <title>Genome dynamics and diversity of Shigella species, the etiologic agents of bacillary dysentery.</title>
        <authorList>
            <person name="Yang F."/>
            <person name="Yang J."/>
            <person name="Zhang X."/>
            <person name="Chen L."/>
            <person name="Jiang Y."/>
            <person name="Yan Y."/>
            <person name="Tang X."/>
            <person name="Wang J."/>
            <person name="Xiong Z."/>
            <person name="Dong J."/>
            <person name="Xue Y."/>
            <person name="Zhu Y."/>
            <person name="Xu X."/>
            <person name="Sun L."/>
            <person name="Chen S."/>
            <person name="Nie H."/>
            <person name="Peng J."/>
            <person name="Xu J."/>
            <person name="Wang Y."/>
            <person name="Yuan Z."/>
            <person name="Wen Y."/>
            <person name="Yao Z."/>
            <person name="Shen Y."/>
            <person name="Qiang B."/>
            <person name="Hou Y."/>
            <person name="Yu J."/>
            <person name="Jin Q."/>
        </authorList>
    </citation>
    <scope>NUCLEOTIDE SEQUENCE [LARGE SCALE GENOMIC DNA]</scope>
    <source>
        <strain>Ss046</strain>
    </source>
</reference>